<protein>
    <recommendedName>
        <fullName>N-acetylglucosaminyl-diphospho-decaprenol L-rhamnosyltransferase</fullName>
        <ecNumber>2.4.1.289</ecNumber>
    </recommendedName>
    <alternativeName>
        <fullName>Rhamnosyltransferase WbbL</fullName>
    </alternativeName>
    <alternativeName>
        <fullName>dTDP-Rha:alpha-D-GlcNAc-pyrophosphate polyprenol, alpha-3-L-rhamnosyltransferase</fullName>
    </alternativeName>
</protein>
<gene>
    <name type="primary">wbbL</name>
    <name type="synonym">wbbL1</name>
    <name type="ordered locus">Rv3265c</name>
</gene>
<dbReference type="EC" id="2.4.1.289"/>
<dbReference type="EMBL" id="AL123456">
    <property type="protein sequence ID" value="CCP46084.1"/>
    <property type="status" value="ALT_INIT"/>
    <property type="molecule type" value="Genomic_DNA"/>
</dbReference>
<dbReference type="PIR" id="B70978">
    <property type="entry name" value="B70978"/>
</dbReference>
<dbReference type="RefSeq" id="YP_177952.3">
    <property type="nucleotide sequence ID" value="NC_000962.3"/>
</dbReference>
<dbReference type="SMR" id="P9WMY3"/>
<dbReference type="FunCoup" id="P9WMY3">
    <property type="interactions" value="13"/>
</dbReference>
<dbReference type="STRING" id="83332.Rv3265c"/>
<dbReference type="PaxDb" id="83332-Rv3265c"/>
<dbReference type="DNASU" id="888714"/>
<dbReference type="GeneID" id="888714"/>
<dbReference type="KEGG" id="mtu:Rv3265c"/>
<dbReference type="PATRIC" id="fig|83332.12.peg.3652"/>
<dbReference type="TubercuList" id="Rv3265c"/>
<dbReference type="eggNOG" id="COG1216">
    <property type="taxonomic scope" value="Bacteria"/>
</dbReference>
<dbReference type="InParanoid" id="P9WMY3"/>
<dbReference type="OrthoDB" id="9771846at2"/>
<dbReference type="BioCyc" id="MetaCyc:G185E-7539-MONOMER"/>
<dbReference type="BRENDA" id="2.4.1.289">
    <property type="organism ID" value="3445"/>
</dbReference>
<dbReference type="Proteomes" id="UP000001584">
    <property type="component" value="Chromosome"/>
</dbReference>
<dbReference type="GO" id="GO:0005886">
    <property type="term" value="C:plasma membrane"/>
    <property type="evidence" value="ECO:0007005"/>
    <property type="project" value="MTBBASE"/>
</dbReference>
<dbReference type="GO" id="GO:0102096">
    <property type="term" value="F:decaprenyl-N-acetyl-alpha-D-glucosaminyl-pyrophosphate:dTDP-alpha-L-rhamnose rhamnosyltransferase activity"/>
    <property type="evidence" value="ECO:0007669"/>
    <property type="project" value="UniProtKB-EC"/>
</dbReference>
<dbReference type="GO" id="GO:0016758">
    <property type="term" value="F:hexosyltransferase activity"/>
    <property type="evidence" value="ECO:0000314"/>
    <property type="project" value="UniProtKB"/>
</dbReference>
<dbReference type="GO" id="GO:0000271">
    <property type="term" value="P:polysaccharide biosynthetic process"/>
    <property type="evidence" value="ECO:0000314"/>
    <property type="project" value="UniProtKB"/>
</dbReference>
<dbReference type="CDD" id="cd04186">
    <property type="entry name" value="GT_2_like_c"/>
    <property type="match status" value="1"/>
</dbReference>
<dbReference type="FunFam" id="3.90.550.10:FF:000182">
    <property type="entry name" value="dTDP-RHA:A-D-GlcNAc-diphosphoryl polyprenolA-3-L-rhamnosyl transferase"/>
    <property type="match status" value="1"/>
</dbReference>
<dbReference type="Gene3D" id="3.90.550.10">
    <property type="entry name" value="Spore Coat Polysaccharide Biosynthesis Protein SpsA, Chain A"/>
    <property type="match status" value="1"/>
</dbReference>
<dbReference type="InterPro" id="IPR001173">
    <property type="entry name" value="Glyco_trans_2-like"/>
</dbReference>
<dbReference type="InterPro" id="IPR029044">
    <property type="entry name" value="Nucleotide-diphossugar_trans"/>
</dbReference>
<dbReference type="PANTHER" id="PTHR43179">
    <property type="entry name" value="RHAMNOSYLTRANSFERASE WBBL"/>
    <property type="match status" value="1"/>
</dbReference>
<dbReference type="PANTHER" id="PTHR43179:SF7">
    <property type="entry name" value="RHAMNOSYLTRANSFERASE WBBL"/>
    <property type="match status" value="1"/>
</dbReference>
<dbReference type="Pfam" id="PF00535">
    <property type="entry name" value="Glycos_transf_2"/>
    <property type="match status" value="1"/>
</dbReference>
<dbReference type="SUPFAM" id="SSF53448">
    <property type="entry name" value="Nucleotide-diphospho-sugar transferases"/>
    <property type="match status" value="1"/>
</dbReference>
<organism>
    <name type="scientific">Mycobacterium tuberculosis (strain ATCC 25618 / H37Rv)</name>
    <dbReference type="NCBI Taxonomy" id="83332"/>
    <lineage>
        <taxon>Bacteria</taxon>
        <taxon>Bacillati</taxon>
        <taxon>Actinomycetota</taxon>
        <taxon>Actinomycetes</taxon>
        <taxon>Mycobacteriales</taxon>
        <taxon>Mycobacteriaceae</taxon>
        <taxon>Mycobacterium</taxon>
        <taxon>Mycobacterium tuberculosis complex</taxon>
    </lineage>
</organism>
<accession>P9WMY3</accession>
<accession>L0TF42</accession>
<accession>Q6MWZ0</accession>
<accession>Q7D5T2</accession>
<feature type="initiator methionine" description="Removed" evidence="3">
    <location>
        <position position="1"/>
    </location>
</feature>
<feature type="chain" id="PRO_0000395354" description="N-acetylglucosaminyl-diphospho-decaprenol L-rhamnosyltransferase">
    <location>
        <begin position="2"/>
        <end position="307"/>
    </location>
</feature>
<reference key="1">
    <citation type="journal article" date="1998" name="Nature">
        <title>Deciphering the biology of Mycobacterium tuberculosis from the complete genome sequence.</title>
        <authorList>
            <person name="Cole S.T."/>
            <person name="Brosch R."/>
            <person name="Parkhill J."/>
            <person name="Garnier T."/>
            <person name="Churcher C.M."/>
            <person name="Harris D.E."/>
            <person name="Gordon S.V."/>
            <person name="Eiglmeier K."/>
            <person name="Gas S."/>
            <person name="Barry C.E. III"/>
            <person name="Tekaia F."/>
            <person name="Badcock K."/>
            <person name="Basham D."/>
            <person name="Brown D."/>
            <person name="Chillingworth T."/>
            <person name="Connor R."/>
            <person name="Davies R.M."/>
            <person name="Devlin K."/>
            <person name="Feltwell T."/>
            <person name="Gentles S."/>
            <person name="Hamlin N."/>
            <person name="Holroyd S."/>
            <person name="Hornsby T."/>
            <person name="Jagels K."/>
            <person name="Krogh A."/>
            <person name="McLean J."/>
            <person name="Moule S."/>
            <person name="Murphy L.D."/>
            <person name="Oliver S."/>
            <person name="Osborne J."/>
            <person name="Quail M.A."/>
            <person name="Rajandream M.A."/>
            <person name="Rogers J."/>
            <person name="Rutter S."/>
            <person name="Seeger K."/>
            <person name="Skelton S."/>
            <person name="Squares S."/>
            <person name="Squares R."/>
            <person name="Sulston J.E."/>
            <person name="Taylor K."/>
            <person name="Whitehead S."/>
            <person name="Barrell B.G."/>
        </authorList>
    </citation>
    <scope>NUCLEOTIDE SEQUENCE [LARGE SCALE GENOMIC DNA]</scope>
    <source>
        <strain>ATCC 25618 / H37Rv</strain>
    </source>
</reference>
<reference key="2">
    <citation type="journal article" date="2022" name="Genomics">
        <title>Deep N-terminomics of Mycobacterium tuberculosis H37Rv extensively correct annotated encoding genes.</title>
        <authorList>
            <person name="Shi J."/>
            <person name="Meng S."/>
            <person name="Wan L."/>
            <person name="Zhang Z."/>
            <person name="Jiang S."/>
            <person name="Zhu H."/>
            <person name="Dai E."/>
            <person name="Chang L."/>
            <person name="Gao H."/>
            <person name="Wan K."/>
            <person name="Zhang L."/>
            <person name="Zhao X."/>
            <person name="Liu H."/>
            <person name="Lyu Z."/>
            <person name="Zhang Y."/>
            <person name="Xu P."/>
        </authorList>
    </citation>
    <scope>PROTEIN SEQUENCE OF 2-20</scope>
    <scope>SEQUENCE REVISION TO N-TERMINUS</scope>
    <source>
        <strain>H37Rv</strain>
    </source>
</reference>
<reference key="3">
    <citation type="journal article" date="2004" name="J. Biol. Chem.">
        <title>Inactivation of the mycobacterial rhamnosyltransferase, which is needed for the formation of the arabinogalactan-peptidoglycan linker, leads to irreversible loss of viability.</title>
        <authorList>
            <person name="Mills J.A."/>
            <person name="Motichka K."/>
            <person name="Jucker M."/>
            <person name="Wu H.P."/>
            <person name="Uhlik B.C."/>
            <person name="Stern R.J."/>
            <person name="Scherman M.S."/>
            <person name="Vissa V.D."/>
            <person name="Pan F."/>
            <person name="Kundu M."/>
            <person name="Ma Y.F."/>
            <person name="McNeil M."/>
        </authorList>
    </citation>
    <scope>FUNCTION AS A RHAMNOSYLTRANSFERASE</scope>
    <scope>DISRUPTION PHENOTYPE</scope>
</reference>
<reference key="4">
    <citation type="journal article" date="2008" name="BMC Syst. Biol.">
        <title>targetTB: a target identification pipeline for Mycobacterium tuberculosis through an interactome, reactome and genome-scale structural analysis.</title>
        <authorList>
            <person name="Raman K."/>
            <person name="Yeturu K."/>
            <person name="Chandra N."/>
        </authorList>
    </citation>
    <scope>IDENTIFICATION AS A DRUG TARGET [LARGE SCALE ANALYSIS]</scope>
</reference>
<reference key="5">
    <citation type="journal article" date="2008" name="Microbiology">
        <title>Development of a microtitre plate-based assay for lipid-linked glycosyltransferase products using the mycobacterial cell wall rhamnosyltransferase WbbL.</title>
        <authorList>
            <person name="Grzegorzewicz A.E."/>
            <person name="Ma Y."/>
            <person name="Jones V."/>
            <person name="Crick D."/>
            <person name="Liav A."/>
            <person name="McNeil M.R."/>
        </authorList>
    </citation>
    <scope>FUNCTION</scope>
    <scope>CATALYTIC ACTIVITY</scope>
    <scope>COFACTOR</scope>
    <scope>BIOPHYSICOCHEMICAL PROPERTIES</scope>
</reference>
<reference key="6">
    <citation type="journal article" date="2011" name="Mol. Cell. Proteomics">
        <title>Proteogenomic analysis of Mycobacterium tuberculosis by high resolution mass spectrometry.</title>
        <authorList>
            <person name="Kelkar D.S."/>
            <person name="Kumar D."/>
            <person name="Kumar P."/>
            <person name="Balakrishnan L."/>
            <person name="Muthusamy B."/>
            <person name="Yadav A.K."/>
            <person name="Shrivastava P."/>
            <person name="Marimuthu A."/>
            <person name="Anand S."/>
            <person name="Sundaram H."/>
            <person name="Kingsbury R."/>
            <person name="Harsha H.C."/>
            <person name="Nair B."/>
            <person name="Prasad T.S."/>
            <person name="Chauhan D.S."/>
            <person name="Katoch K."/>
            <person name="Katoch V.M."/>
            <person name="Kumar P."/>
            <person name="Chaerkady R."/>
            <person name="Ramachandran S."/>
            <person name="Dash D."/>
            <person name="Pandey A."/>
        </authorList>
    </citation>
    <scope>IDENTIFICATION BY MASS SPECTROMETRY [LARGE SCALE ANALYSIS]</scope>
    <source>
        <strain>ATCC 25618 / H37Rv</strain>
    </source>
</reference>
<name>WBBL_MYCTU</name>
<proteinExistence type="evidence at protein level"/>
<comment type="function">
    <text evidence="1 2">Involved in the biosynthesis of the mycolylarabinogalactan-peptidoglycan (mAGP) complex, an essential component of the mycobacterial cell wall. Catalyzes the transfer of the rhamnosyl moiety from dTDP-rhamnosyl (dTDP-Rha) onto the decaprenyl-pyrophosphoryl-GlcNAc (C50-PP-GlcNAc), yielding rhamnosyl-decaprenyl-pyrophosphoryl-GlcNAc (Rha-C50-PP-GlcNAc).</text>
</comment>
<comment type="catalytic activity">
    <reaction evidence="2">
        <text>N-acetyl-alpha-D-glucosaminyl-1-diphospho-trans,octa-cis-decaprenol + dTDP-beta-L-rhamnose = alpha-L-rhamnosyl-(1-&gt;3)-N-acetyl-alpha-D-glucosaminyl-diphospho-trans,octa-cis-decaprenol + dTDP + H(+)</text>
        <dbReference type="Rhea" id="RHEA:34487"/>
        <dbReference type="ChEBI" id="CHEBI:15378"/>
        <dbReference type="ChEBI" id="CHEBI:57510"/>
        <dbReference type="ChEBI" id="CHEBI:58369"/>
        <dbReference type="ChEBI" id="CHEBI:65080"/>
        <dbReference type="ChEBI" id="CHEBI:67209"/>
        <dbReference type="EC" id="2.4.1.289"/>
    </reaction>
</comment>
<comment type="cofactor">
    <cofactor evidence="2">
        <name>Mn(2+)</name>
        <dbReference type="ChEBI" id="CHEBI:29035"/>
    </cofactor>
    <cofactor evidence="2">
        <name>Mg(2+)</name>
        <dbReference type="ChEBI" id="CHEBI:18420"/>
    </cofactor>
</comment>
<comment type="biophysicochemical properties">
    <kinetics>
        <KM evidence="2">18 uM for N-acetyl-alpha-D-glucosaminyl-diphospho-trans,octacis-decaprenol</KM>
        <KM evidence="2">35 uM for dTDP-6-deoxy-beta-L-mannose</KM>
    </kinetics>
    <phDependence>
        <text evidence="2">Optimum pH is 8.6.</text>
    </phDependence>
    <temperatureDependence>
        <text evidence="2">Optimum temperature is 30 degrees Celsius.</text>
    </temperatureDependence>
</comment>
<comment type="disruption phenotype">
    <text evidence="1">Cells lacking this gene lead to irreversible loss of viability.</text>
</comment>
<comment type="miscellaneous">
    <text>Was identified as a high-confidence drug target.</text>
</comment>
<comment type="similarity">
    <text evidence="4">Belongs to the glycosyltransferase 2 family.</text>
</comment>
<comment type="sequence caution" evidence="3">
    <conflict type="erroneous initiation">
        <sequence resource="EMBL-CDS" id="CCP46084"/>
    </conflict>
    <text>Truncated N-terminus.</text>
</comment>
<sequence length="307" mass="33920">MTDVLPVVAVTYSPGPHLERFLASLSLATERPVSVLLADNGSTDGTPQAAVQRYPNVRLLPTGANLGYGTAVNRTIAQLGEMAGDAGEPWVDDWVIVANPDVQWGPGSIDALLDAASRWPRAGALGPLIRDPDGSVYPSARQMPSLIRGGMHAVLGPFWPRNPWTTAYRQERLEPSERPVGWLSGSCLLVRRSAFGQVGGFDERYFMYMEDVDLGDRLGKAGWLSVYVPSAEVLHHKAHSTGRDPASHLAAHHKSTYIFLADRHSGWWRAPLRWTLRGSLALRSHLMVRSSLRRSRRRKLKLVEGRH</sequence>
<keyword id="KW-0903">Direct protein sequencing</keyword>
<keyword id="KW-0328">Glycosyltransferase</keyword>
<keyword id="KW-1185">Reference proteome</keyword>
<keyword id="KW-0808">Transferase</keyword>
<evidence type="ECO:0000269" key="1">
    <source>
    </source>
</evidence>
<evidence type="ECO:0000269" key="2">
    <source>
    </source>
</evidence>
<evidence type="ECO:0000269" key="3">
    <source>
    </source>
</evidence>
<evidence type="ECO:0000305" key="4"/>